<proteinExistence type="evidence at protein level"/>
<reference key="1">
    <citation type="journal article" date="1994" name="EMBO J.">
        <title>The protein encoded by the Drosophila position-effect variegation suppressor gene Su(var)3-9 combines domains of antagonistic regulators of homeotic gene complexes.</title>
        <authorList>
            <person name="Tschiersch B."/>
            <person name="Hofmann A."/>
            <person name="Krauss V."/>
            <person name="Dorn R."/>
            <person name="Korge G."/>
            <person name="Reuter G."/>
        </authorList>
    </citation>
    <scope>NUCLEOTIDE SEQUENCE [MRNA]</scope>
    <scope>DEVELOPMENTAL STAGE</scope>
    <source>
        <strain>Oregon-R</strain>
    </source>
</reference>
<reference key="2">
    <citation type="journal article" date="2000" name="Genetics">
        <title>Two genes become one: the genes encoding heterochromatin protein Su(var)3-9 and translation initiation factor subunit eIF-2gamma are joined to a dicistronic unit in holometabolic insects.</title>
        <authorList>
            <person name="Krauss V."/>
            <person name="Reuter G."/>
        </authorList>
    </citation>
    <scope>NUCLEOTIDE SEQUENCE [GENOMIC DNA]</scope>
    <source>
        <strain>Karsnas</strain>
    </source>
</reference>
<reference key="3">
    <citation type="submission" date="2003-05" db="EMBL/GenBank/DDBJ databases">
        <title>Histone H3-K9 methylation potential of Drosophila Su(var)3-9 mutants correlates with extent of gene silencing.</title>
        <authorList>
            <person name="Schotta G."/>
            <person name="Ebert A."/>
            <person name="Lein S."/>
            <person name="Kubicek S."/>
            <person name="Krauss V."/>
            <person name="Jenuwein T."/>
            <person name="Reuter F."/>
        </authorList>
    </citation>
    <scope>SEQUENCE REVISION TO 509</scope>
</reference>
<reference key="4">
    <citation type="journal article" date="2000" name="Science">
        <title>The genome sequence of Drosophila melanogaster.</title>
        <authorList>
            <person name="Adams M.D."/>
            <person name="Celniker S.E."/>
            <person name="Holt R.A."/>
            <person name="Evans C.A."/>
            <person name="Gocayne J.D."/>
            <person name="Amanatides P.G."/>
            <person name="Scherer S.E."/>
            <person name="Li P.W."/>
            <person name="Hoskins R.A."/>
            <person name="Galle R.F."/>
            <person name="George R.A."/>
            <person name="Lewis S.E."/>
            <person name="Richards S."/>
            <person name="Ashburner M."/>
            <person name="Henderson S.N."/>
            <person name="Sutton G.G."/>
            <person name="Wortman J.R."/>
            <person name="Yandell M.D."/>
            <person name="Zhang Q."/>
            <person name="Chen L.X."/>
            <person name="Brandon R.C."/>
            <person name="Rogers Y.-H.C."/>
            <person name="Blazej R.G."/>
            <person name="Champe M."/>
            <person name="Pfeiffer B.D."/>
            <person name="Wan K.H."/>
            <person name="Doyle C."/>
            <person name="Baxter E.G."/>
            <person name="Helt G."/>
            <person name="Nelson C.R."/>
            <person name="Miklos G.L.G."/>
            <person name="Abril J.F."/>
            <person name="Agbayani A."/>
            <person name="An H.-J."/>
            <person name="Andrews-Pfannkoch C."/>
            <person name="Baldwin D."/>
            <person name="Ballew R.M."/>
            <person name="Basu A."/>
            <person name="Baxendale J."/>
            <person name="Bayraktaroglu L."/>
            <person name="Beasley E.M."/>
            <person name="Beeson K.Y."/>
            <person name="Benos P.V."/>
            <person name="Berman B.P."/>
            <person name="Bhandari D."/>
            <person name="Bolshakov S."/>
            <person name="Borkova D."/>
            <person name="Botchan M.R."/>
            <person name="Bouck J."/>
            <person name="Brokstein P."/>
            <person name="Brottier P."/>
            <person name="Burtis K.C."/>
            <person name="Busam D.A."/>
            <person name="Butler H."/>
            <person name="Cadieu E."/>
            <person name="Center A."/>
            <person name="Chandra I."/>
            <person name="Cherry J.M."/>
            <person name="Cawley S."/>
            <person name="Dahlke C."/>
            <person name="Davenport L.B."/>
            <person name="Davies P."/>
            <person name="de Pablos B."/>
            <person name="Delcher A."/>
            <person name="Deng Z."/>
            <person name="Mays A.D."/>
            <person name="Dew I."/>
            <person name="Dietz S.M."/>
            <person name="Dodson K."/>
            <person name="Doup L.E."/>
            <person name="Downes M."/>
            <person name="Dugan-Rocha S."/>
            <person name="Dunkov B.C."/>
            <person name="Dunn P."/>
            <person name="Durbin K.J."/>
            <person name="Evangelista C.C."/>
            <person name="Ferraz C."/>
            <person name="Ferriera S."/>
            <person name="Fleischmann W."/>
            <person name="Fosler C."/>
            <person name="Gabrielian A.E."/>
            <person name="Garg N.S."/>
            <person name="Gelbart W.M."/>
            <person name="Glasser K."/>
            <person name="Glodek A."/>
            <person name="Gong F."/>
            <person name="Gorrell J.H."/>
            <person name="Gu Z."/>
            <person name="Guan P."/>
            <person name="Harris M."/>
            <person name="Harris N.L."/>
            <person name="Harvey D.A."/>
            <person name="Heiman T.J."/>
            <person name="Hernandez J.R."/>
            <person name="Houck J."/>
            <person name="Hostin D."/>
            <person name="Houston K.A."/>
            <person name="Howland T.J."/>
            <person name="Wei M.-H."/>
            <person name="Ibegwam C."/>
            <person name="Jalali M."/>
            <person name="Kalush F."/>
            <person name="Karpen G.H."/>
            <person name="Ke Z."/>
            <person name="Kennison J.A."/>
            <person name="Ketchum K.A."/>
            <person name="Kimmel B.E."/>
            <person name="Kodira C.D."/>
            <person name="Kraft C.L."/>
            <person name="Kravitz S."/>
            <person name="Kulp D."/>
            <person name="Lai Z."/>
            <person name="Lasko P."/>
            <person name="Lei Y."/>
            <person name="Levitsky A.A."/>
            <person name="Li J.H."/>
            <person name="Li Z."/>
            <person name="Liang Y."/>
            <person name="Lin X."/>
            <person name="Liu X."/>
            <person name="Mattei B."/>
            <person name="McIntosh T.C."/>
            <person name="McLeod M.P."/>
            <person name="McPherson D."/>
            <person name="Merkulov G."/>
            <person name="Milshina N.V."/>
            <person name="Mobarry C."/>
            <person name="Morris J."/>
            <person name="Moshrefi A."/>
            <person name="Mount S.M."/>
            <person name="Moy M."/>
            <person name="Murphy B."/>
            <person name="Murphy L."/>
            <person name="Muzny D.M."/>
            <person name="Nelson D.L."/>
            <person name="Nelson D.R."/>
            <person name="Nelson K.A."/>
            <person name="Nixon K."/>
            <person name="Nusskern D.R."/>
            <person name="Pacleb J.M."/>
            <person name="Palazzolo M."/>
            <person name="Pittman G.S."/>
            <person name="Pan S."/>
            <person name="Pollard J."/>
            <person name="Puri V."/>
            <person name="Reese M.G."/>
            <person name="Reinert K."/>
            <person name="Remington K."/>
            <person name="Saunders R.D.C."/>
            <person name="Scheeler F."/>
            <person name="Shen H."/>
            <person name="Shue B.C."/>
            <person name="Siden-Kiamos I."/>
            <person name="Simpson M."/>
            <person name="Skupski M.P."/>
            <person name="Smith T.J."/>
            <person name="Spier E."/>
            <person name="Spradling A.C."/>
            <person name="Stapleton M."/>
            <person name="Strong R."/>
            <person name="Sun E."/>
            <person name="Svirskas R."/>
            <person name="Tector C."/>
            <person name="Turner R."/>
            <person name="Venter E."/>
            <person name="Wang A.H."/>
            <person name="Wang X."/>
            <person name="Wang Z.-Y."/>
            <person name="Wassarman D.A."/>
            <person name="Weinstock G.M."/>
            <person name="Weissenbach J."/>
            <person name="Williams S.M."/>
            <person name="Woodage T."/>
            <person name="Worley K.C."/>
            <person name="Wu D."/>
            <person name="Yang S."/>
            <person name="Yao Q.A."/>
            <person name="Ye J."/>
            <person name="Yeh R.-F."/>
            <person name="Zaveri J.S."/>
            <person name="Zhan M."/>
            <person name="Zhang G."/>
            <person name="Zhao Q."/>
            <person name="Zheng L."/>
            <person name="Zheng X.H."/>
            <person name="Zhong F.N."/>
            <person name="Zhong W."/>
            <person name="Zhou X."/>
            <person name="Zhu S.C."/>
            <person name="Zhu X."/>
            <person name="Smith H.O."/>
            <person name="Gibbs R.A."/>
            <person name="Myers E.W."/>
            <person name="Rubin G.M."/>
            <person name="Venter J.C."/>
        </authorList>
    </citation>
    <scope>NUCLEOTIDE SEQUENCE [LARGE SCALE GENOMIC DNA]</scope>
    <source>
        <strain>Berkeley</strain>
    </source>
</reference>
<reference key="5">
    <citation type="journal article" date="2002" name="Genome Biol.">
        <title>Annotation of the Drosophila melanogaster euchromatic genome: a systematic review.</title>
        <authorList>
            <person name="Misra S."/>
            <person name="Crosby M.A."/>
            <person name="Mungall C.J."/>
            <person name="Matthews B.B."/>
            <person name="Campbell K.S."/>
            <person name="Hradecky P."/>
            <person name="Huang Y."/>
            <person name="Kaminker J.S."/>
            <person name="Millburn G.H."/>
            <person name="Prochnik S.E."/>
            <person name="Smith C.D."/>
            <person name="Tupy J.L."/>
            <person name="Whitfield E.J."/>
            <person name="Bayraktaroglu L."/>
            <person name="Berman B.P."/>
            <person name="Bettencourt B.R."/>
            <person name="Celniker S.E."/>
            <person name="de Grey A.D.N.J."/>
            <person name="Drysdale R.A."/>
            <person name="Harris N.L."/>
            <person name="Richter J."/>
            <person name="Russo S."/>
            <person name="Schroeder A.J."/>
            <person name="Shu S.Q."/>
            <person name="Stapleton M."/>
            <person name="Yamada C."/>
            <person name="Ashburner M."/>
            <person name="Gelbart W.M."/>
            <person name="Rubin G.M."/>
            <person name="Lewis S.E."/>
        </authorList>
    </citation>
    <scope>GENOME REANNOTATION</scope>
    <source>
        <strain>Berkeley</strain>
    </source>
</reference>
<reference key="6">
    <citation type="journal article" date="2001" name="EMBO Rep.">
        <title>Physical and functional association of SU(VAR)3-9 and HDAC1 in Drosophila.</title>
        <authorList>
            <person name="Czermin B."/>
            <person name="Schotta G."/>
            <person name="Huelsmann B.B."/>
            <person name="Brehm A."/>
            <person name="Becker P.B."/>
            <person name="Reuter G."/>
            <person name="Imhof A."/>
        </authorList>
    </citation>
    <scope>INTERACTION WITH HDAC1</scope>
</reference>
<reference key="7">
    <citation type="journal article" date="2002" name="EMBO J.">
        <title>Central role of Drosophila SU(VAR)3-9 in histone H3-K9 methylation and heterochromatic gene silencing.</title>
        <authorList>
            <person name="Schotta G."/>
            <person name="Ebert A."/>
            <person name="Krauss V."/>
            <person name="Fischer A."/>
            <person name="Hoffmann J."/>
            <person name="Rea S."/>
            <person name="Jenuwein T."/>
            <person name="Dorn R."/>
            <person name="Reuter G."/>
        </authorList>
    </citation>
    <scope>CATALYTIC ACTIVITY</scope>
    <scope>INTERACTION WITH SU(VAR)205 AND SU(VAR)3-7</scope>
</reference>
<reference key="8">
    <citation type="journal article" date="2003" name="Genes Dev.">
        <title>Distinct HP1 and Su(var)3-9 complexes bind to sets of developmentally coexpressed genes depending on chromosomal location.</title>
        <authorList>
            <person name="Greil F."/>
            <person name="van der Kraan I."/>
            <person name="Delrow J."/>
            <person name="Smothers J.F."/>
            <person name="de Wit E."/>
            <person name="Bussemaker H.J."/>
            <person name="van Driel R."/>
            <person name="Henikoff S."/>
            <person name="van Steensel B."/>
        </authorList>
    </citation>
    <scope>FUNCTION</scope>
</reference>
<reference evidence="12" key="9">
    <citation type="journal article" date="2015" name="PLoS Genet.">
        <title>An Interaction between RRP6 and SU(VAR)3-9 Targets RRP6 to Heterochromatin and Contributes to Heterochromatin Maintenance in Drosophila melanogaster.</title>
        <authorList>
            <person name="Eberle A.B."/>
            <person name="Jordan-Pla A."/>
            <person name="Ganez-Zapater A."/>
            <person name="Hessle V."/>
            <person name="Silberberg G."/>
            <person name="von Euler A."/>
            <person name="Silverstein R.A."/>
            <person name="Visa N."/>
        </authorList>
    </citation>
    <scope>INTERACTION WITH RRP6</scope>
    <scope>SUBCELLULAR LOCATION</scope>
</reference>
<keyword id="KW-0137">Centromere</keyword>
<keyword id="KW-0156">Chromatin regulator</keyword>
<keyword id="KW-0158">Chromosome</keyword>
<keyword id="KW-0479">Metal-binding</keyword>
<keyword id="KW-0489">Methyltransferase</keyword>
<keyword id="KW-0539">Nucleus</keyword>
<keyword id="KW-1185">Reference proteome</keyword>
<keyword id="KW-0678">Repressor</keyword>
<keyword id="KW-0949">S-adenosyl-L-methionine</keyword>
<keyword id="KW-0804">Transcription</keyword>
<keyword id="KW-0805">Transcription regulation</keyword>
<keyword id="KW-0808">Transferase</keyword>
<keyword id="KW-0862">Zinc</keyword>
<dbReference type="EC" id="2.1.1.355" evidence="8"/>
<dbReference type="EMBL" id="X80070">
    <property type="protein sequence ID" value="CAA56376.1"/>
    <property type="molecule type" value="mRNA"/>
</dbReference>
<dbReference type="EMBL" id="AJ290956">
    <property type="protein sequence ID" value="CAB93768.2"/>
    <property type="molecule type" value="Genomic_DNA"/>
</dbReference>
<dbReference type="EMBL" id="AE014297">
    <property type="protein sequence ID" value="AAF55154.1"/>
    <property type="molecule type" value="Genomic_DNA"/>
</dbReference>
<dbReference type="PIR" id="S47004">
    <property type="entry name" value="S47004"/>
</dbReference>
<dbReference type="RefSeq" id="NP_524357.2">
    <property type="nucleotide sequence ID" value="NM_079633.3"/>
</dbReference>
<dbReference type="SMR" id="P45975"/>
<dbReference type="BioGRID" id="66596">
    <property type="interactions" value="42"/>
</dbReference>
<dbReference type="DIP" id="DIP-23970N"/>
<dbReference type="FunCoup" id="P45975">
    <property type="interactions" value="1551"/>
</dbReference>
<dbReference type="IntAct" id="P45975">
    <property type="interactions" value="4"/>
</dbReference>
<dbReference type="MINT" id="P45975"/>
<dbReference type="STRING" id="7227.FBpp0302536"/>
<dbReference type="BindingDB" id="P45975"/>
<dbReference type="ChEMBL" id="CHEMBL2169720"/>
<dbReference type="PaxDb" id="7227-FBpp0302536"/>
<dbReference type="GeneID" id="41483"/>
<dbReference type="KEGG" id="dme:Dmel_CG43664"/>
<dbReference type="AGR" id="FB:FBgn0263755"/>
<dbReference type="CTD" id="41483"/>
<dbReference type="FlyBase" id="FBgn0263755">
    <property type="gene designation" value="Su(var)3-9"/>
</dbReference>
<dbReference type="VEuPathDB" id="VectorBase:FBgn0263755"/>
<dbReference type="eggNOG" id="KOG1082">
    <property type="taxonomic scope" value="Eukaryota"/>
</dbReference>
<dbReference type="HOGENOM" id="CLU_020840_8_1_1"/>
<dbReference type="InParanoid" id="P45975"/>
<dbReference type="OrthoDB" id="1045173at2759"/>
<dbReference type="PhylomeDB" id="P45975"/>
<dbReference type="Reactome" id="R-DME-427359">
    <property type="pathway name" value="SIRT1 negatively regulates rRNA expression"/>
</dbReference>
<dbReference type="SABIO-RK" id="P45975"/>
<dbReference type="SignaLink" id="P45975"/>
<dbReference type="BioGRID-ORCS" id="41483">
    <property type="hits" value="1 hit in 3 CRISPR screens"/>
</dbReference>
<dbReference type="GenomeRNAi" id="41483"/>
<dbReference type="PRO" id="PR:P45975"/>
<dbReference type="Proteomes" id="UP000000803">
    <property type="component" value="Chromosome 3R"/>
</dbReference>
<dbReference type="ExpressionAtlas" id="P45975">
    <property type="expression patterns" value="baseline and differential"/>
</dbReference>
<dbReference type="GO" id="GO:0000775">
    <property type="term" value="C:chromosome, centromeric region"/>
    <property type="evidence" value="ECO:0000304"/>
    <property type="project" value="FlyBase"/>
</dbReference>
<dbReference type="GO" id="GO:0000781">
    <property type="term" value="C:chromosome, telomeric region"/>
    <property type="evidence" value="ECO:0007669"/>
    <property type="project" value="GOC"/>
</dbReference>
<dbReference type="GO" id="GO:0000792">
    <property type="term" value="C:heterochromatin"/>
    <property type="evidence" value="ECO:0000314"/>
    <property type="project" value="FlyBase"/>
</dbReference>
<dbReference type="GO" id="GO:0005634">
    <property type="term" value="C:nucleus"/>
    <property type="evidence" value="ECO:0000318"/>
    <property type="project" value="GO_Central"/>
</dbReference>
<dbReference type="GO" id="GO:0005721">
    <property type="term" value="C:pericentric heterochromatin"/>
    <property type="evidence" value="ECO:0000314"/>
    <property type="project" value="FlyBase"/>
</dbReference>
<dbReference type="GO" id="GO:0005701">
    <property type="term" value="C:polytene chromosome chromocenter"/>
    <property type="evidence" value="ECO:0000314"/>
    <property type="project" value="FlyBase"/>
</dbReference>
<dbReference type="GO" id="GO:0003682">
    <property type="term" value="F:chromatin binding"/>
    <property type="evidence" value="ECO:0000314"/>
    <property type="project" value="FlyBase"/>
</dbReference>
<dbReference type="GO" id="GO:0140942">
    <property type="term" value="F:histone H3K9 dimethyltransferase activity"/>
    <property type="evidence" value="ECO:0000314"/>
    <property type="project" value="FlyBase"/>
</dbReference>
<dbReference type="GO" id="GO:0046974">
    <property type="term" value="F:histone H3K9 methyltransferase activity"/>
    <property type="evidence" value="ECO:0000314"/>
    <property type="project" value="FlyBase"/>
</dbReference>
<dbReference type="GO" id="GO:0140949">
    <property type="term" value="F:histone H3K9 trimethyltransferase activity"/>
    <property type="evidence" value="ECO:0000315"/>
    <property type="project" value="FlyBase"/>
</dbReference>
<dbReference type="GO" id="GO:0042054">
    <property type="term" value="F:histone methyltransferase activity"/>
    <property type="evidence" value="ECO:0000314"/>
    <property type="project" value="UniProtKB"/>
</dbReference>
<dbReference type="GO" id="GO:0008270">
    <property type="term" value="F:zinc ion binding"/>
    <property type="evidence" value="ECO:0007669"/>
    <property type="project" value="InterPro"/>
</dbReference>
<dbReference type="GO" id="GO:0006325">
    <property type="term" value="P:chromatin organization"/>
    <property type="evidence" value="ECO:0000315"/>
    <property type="project" value="FlyBase"/>
</dbReference>
<dbReference type="GO" id="GO:0006338">
    <property type="term" value="P:chromatin remodeling"/>
    <property type="evidence" value="ECO:0000315"/>
    <property type="project" value="FlyBase"/>
</dbReference>
<dbReference type="GO" id="GO:0051276">
    <property type="term" value="P:chromosome organization"/>
    <property type="evidence" value="ECO:0000315"/>
    <property type="project" value="FlyBase"/>
</dbReference>
<dbReference type="GO" id="GO:0048132">
    <property type="term" value="P:female germ-line stem cell asymmetric division"/>
    <property type="evidence" value="ECO:0000314"/>
    <property type="project" value="FlyBase"/>
</dbReference>
<dbReference type="GO" id="GO:0031507">
    <property type="term" value="P:heterochromatin formation"/>
    <property type="evidence" value="ECO:0000314"/>
    <property type="project" value="FlyBase"/>
</dbReference>
<dbReference type="GO" id="GO:0070828">
    <property type="term" value="P:heterochromatin organization"/>
    <property type="evidence" value="ECO:0000315"/>
    <property type="project" value="FlyBase"/>
</dbReference>
<dbReference type="GO" id="GO:0032259">
    <property type="term" value="P:methylation"/>
    <property type="evidence" value="ECO:0007669"/>
    <property type="project" value="UniProtKB-KW"/>
</dbReference>
<dbReference type="GO" id="GO:2001229">
    <property type="term" value="P:negative regulation of response to gamma radiation"/>
    <property type="evidence" value="ECO:0000315"/>
    <property type="project" value="FlyBase"/>
</dbReference>
<dbReference type="GO" id="GO:0048477">
    <property type="term" value="P:oogenesis"/>
    <property type="evidence" value="ECO:0000314"/>
    <property type="project" value="FlyBase"/>
</dbReference>
<dbReference type="GO" id="GO:0031508">
    <property type="term" value="P:pericentric heterochromatin formation"/>
    <property type="evidence" value="ECO:0007001"/>
    <property type="project" value="FlyBase"/>
</dbReference>
<dbReference type="GO" id="GO:0140727">
    <property type="term" value="P:siRNA-mediated pericentric heterochromatin formation"/>
    <property type="evidence" value="ECO:0000315"/>
    <property type="project" value="FlyBase"/>
</dbReference>
<dbReference type="GO" id="GO:0031509">
    <property type="term" value="P:subtelomeric heterochromatin formation"/>
    <property type="evidence" value="ECO:0007001"/>
    <property type="project" value="FlyBase"/>
</dbReference>
<dbReference type="CDD" id="cd00024">
    <property type="entry name" value="CD_CSD"/>
    <property type="match status" value="1"/>
</dbReference>
<dbReference type="CDD" id="cd10542">
    <property type="entry name" value="SET_SUV39H"/>
    <property type="match status" value="1"/>
</dbReference>
<dbReference type="FunFam" id="2.40.50.40:FF:000051">
    <property type="entry name" value="Histone-lysine N-methyltransferase"/>
    <property type="match status" value="1"/>
</dbReference>
<dbReference type="FunFam" id="2.170.270.10:FF:000099">
    <property type="entry name" value="Histone-lysine N-methyltransferase Su(var)3-9"/>
    <property type="match status" value="1"/>
</dbReference>
<dbReference type="FunFam" id="3.40.50.300:FF:002336">
    <property type="entry name" value="Histone-lysine N-methyltransferase Su(var)3-9"/>
    <property type="match status" value="1"/>
</dbReference>
<dbReference type="Gene3D" id="2.40.50.40">
    <property type="match status" value="1"/>
</dbReference>
<dbReference type="Gene3D" id="3.40.50.300">
    <property type="entry name" value="P-loop containing nucleotide triphosphate hydrolases"/>
    <property type="match status" value="1"/>
</dbReference>
<dbReference type="Gene3D" id="2.170.270.10">
    <property type="entry name" value="SET domain"/>
    <property type="match status" value="1"/>
</dbReference>
<dbReference type="InterPro" id="IPR016197">
    <property type="entry name" value="Chromo-like_dom_sf"/>
</dbReference>
<dbReference type="InterPro" id="IPR000953">
    <property type="entry name" value="Chromo/chromo_shadow_dom"/>
</dbReference>
<dbReference type="InterPro" id="IPR023780">
    <property type="entry name" value="Chromo_domain"/>
</dbReference>
<dbReference type="InterPro" id="IPR023779">
    <property type="entry name" value="Chromodomain_CS"/>
</dbReference>
<dbReference type="InterPro" id="IPR011381">
    <property type="entry name" value="H3-K9_MeTrfase_SUV39H1/2-like"/>
</dbReference>
<dbReference type="InterPro" id="IPR050973">
    <property type="entry name" value="H3K9_Histone-Lys_N-MTase"/>
</dbReference>
<dbReference type="InterPro" id="IPR027417">
    <property type="entry name" value="P-loop_NTPase"/>
</dbReference>
<dbReference type="InterPro" id="IPR003616">
    <property type="entry name" value="Post-SET_dom"/>
</dbReference>
<dbReference type="InterPro" id="IPR007728">
    <property type="entry name" value="Pre-SET_dom"/>
</dbReference>
<dbReference type="InterPro" id="IPR001214">
    <property type="entry name" value="SET_dom"/>
</dbReference>
<dbReference type="InterPro" id="IPR046341">
    <property type="entry name" value="SET_dom_sf"/>
</dbReference>
<dbReference type="PANTHER" id="PTHR46223">
    <property type="entry name" value="HISTONE-LYSINE N-METHYLTRANSFERASE SUV39H"/>
    <property type="match status" value="1"/>
</dbReference>
<dbReference type="PANTHER" id="PTHR46223:SF4">
    <property type="entry name" value="HISTONE-LYSINE N-METHYLTRANSFERASE-RELATED"/>
    <property type="match status" value="1"/>
</dbReference>
<dbReference type="Pfam" id="PF00385">
    <property type="entry name" value="Chromo"/>
    <property type="match status" value="1"/>
</dbReference>
<dbReference type="Pfam" id="PF05033">
    <property type="entry name" value="Pre-SET"/>
    <property type="match status" value="1"/>
</dbReference>
<dbReference type="Pfam" id="PF00856">
    <property type="entry name" value="SET"/>
    <property type="match status" value="1"/>
</dbReference>
<dbReference type="PIRSF" id="PIRSF009343">
    <property type="entry name" value="SUV39_SET"/>
    <property type="match status" value="1"/>
</dbReference>
<dbReference type="SMART" id="SM00298">
    <property type="entry name" value="CHROMO"/>
    <property type="match status" value="1"/>
</dbReference>
<dbReference type="SMART" id="SM00468">
    <property type="entry name" value="PreSET"/>
    <property type="match status" value="1"/>
</dbReference>
<dbReference type="SMART" id="SM00317">
    <property type="entry name" value="SET"/>
    <property type="match status" value="1"/>
</dbReference>
<dbReference type="SUPFAM" id="SSF54160">
    <property type="entry name" value="Chromo domain-like"/>
    <property type="match status" value="1"/>
</dbReference>
<dbReference type="SUPFAM" id="SSF52540">
    <property type="entry name" value="P-loop containing nucleoside triphosphate hydrolases"/>
    <property type="match status" value="1"/>
</dbReference>
<dbReference type="SUPFAM" id="SSF82199">
    <property type="entry name" value="SET domain"/>
    <property type="match status" value="1"/>
</dbReference>
<dbReference type="PROSITE" id="PS00598">
    <property type="entry name" value="CHROMO_1"/>
    <property type="match status" value="1"/>
</dbReference>
<dbReference type="PROSITE" id="PS50013">
    <property type="entry name" value="CHROMO_2"/>
    <property type="match status" value="1"/>
</dbReference>
<dbReference type="PROSITE" id="PS50868">
    <property type="entry name" value="POST_SET"/>
    <property type="match status" value="1"/>
</dbReference>
<dbReference type="PROSITE" id="PS50867">
    <property type="entry name" value="PRE_SET"/>
    <property type="match status" value="1"/>
</dbReference>
<dbReference type="PROSITE" id="PS50280">
    <property type="entry name" value="SET"/>
    <property type="match status" value="1"/>
</dbReference>
<comment type="function">
    <text evidence="9">Histone methyltransferase that specifically trimethylates 'Lys-9' of histone H3 using monomethylated H3 'Lys-9' as substrate. H3 'Lys-9' trimethylation represents a specific tag for epigenetic transcriptional repression by recruiting Su(var)205/HP1 to methylated histones. Mainly functions in heterochromatin regions, thereby playing a central role in the establishment of constitutive heterochromatin at pericentric regions. Involved in heterochromatic gene silencing including the modification of position-effect-variegation.</text>
</comment>
<comment type="catalytic activity">
    <reaction evidence="8">
        <text>L-lysyl(9)-[histone H3] + 3 S-adenosyl-L-methionine = N(6),N(6),N(6)-trimethyl-L-lysyl(9)-[histone H3] + 3 S-adenosyl-L-homocysteine + 3 H(+)</text>
        <dbReference type="Rhea" id="RHEA:60276"/>
        <dbReference type="Rhea" id="RHEA-COMP:15538"/>
        <dbReference type="Rhea" id="RHEA-COMP:15546"/>
        <dbReference type="ChEBI" id="CHEBI:15378"/>
        <dbReference type="ChEBI" id="CHEBI:29969"/>
        <dbReference type="ChEBI" id="CHEBI:57856"/>
        <dbReference type="ChEBI" id="CHEBI:59789"/>
        <dbReference type="ChEBI" id="CHEBI:61961"/>
        <dbReference type="EC" id="2.1.1.355"/>
    </reaction>
</comment>
<comment type="subunit">
    <text evidence="7 8 10">Interacts with Su(var)205 and Su(var)3-7. Probably associates with HDAC1/Rpd3. Interacts with Rrp6; the interaction promotes association of Rrp6 with a subset of genomic loci (PubMed:26389589).</text>
</comment>
<comment type="interaction">
    <interactant intactId="EBI-110378">
        <id>P45975</id>
    </interactant>
    <interactant intactId="EBI-151629">
        <id>P02255</id>
        <label>His1:CG33843</label>
    </interactant>
    <organismsDiffer>false</organismsDiffer>
    <experiments>4</experiments>
</comment>
<comment type="interaction">
    <interactant intactId="EBI-110378">
        <id>P45975</id>
    </interactant>
    <interactant intactId="EBI-155532">
        <id>P05205</id>
        <label>Su(var)205</label>
    </interactant>
    <organismsDiffer>false</organismsDiffer>
    <experiments>3</experiments>
</comment>
<comment type="subcellular location">
    <subcellularLocation>
        <location>Nucleus</location>
    </subcellularLocation>
    <subcellularLocation>
        <location>Chromosome</location>
        <location>Centromere</location>
    </subcellularLocation>
    <subcellularLocation>
        <location evidence="10">Chromosome</location>
    </subcellularLocation>
    <text>Associates with centromeric constitutive heterochromatin.</text>
</comment>
<comment type="developmental stage">
    <text evidence="11">Expressed maternally and zygotically. Expressed throughout development with a peak of expression during early embryogenesis (0-9 hours old embryos). Weak expression in larvae, pupae and adult flies.</text>
</comment>
<comment type="domain">
    <text evidence="1">Although the SET domain contains the active site of enzymatic activity, both pre-SET and post-SET domains are required for methyltransferase activity. The SET domain also participates in stable binding to heterochromatin (By similarity).</text>
</comment>
<comment type="domain">
    <text evidence="1">In the pre-SET domain, Cys residues bind 3 zinc ions that are arranged in a triangular cluster; some of these Cys residues contribute to the binding of two zinc ions within the cluster.</text>
</comment>
<comment type="similarity">
    <text evidence="5">Belongs to the class V-like SAM-binding methyltransferase superfamily. Histone-lysine methyltransferase family. Suvar3-9 subfamily.</text>
</comment>
<name>SUV39_DROME</name>
<organism>
    <name type="scientific">Drosophila melanogaster</name>
    <name type="common">Fruit fly</name>
    <dbReference type="NCBI Taxonomy" id="7227"/>
    <lineage>
        <taxon>Eukaryota</taxon>
        <taxon>Metazoa</taxon>
        <taxon>Ecdysozoa</taxon>
        <taxon>Arthropoda</taxon>
        <taxon>Hexapoda</taxon>
        <taxon>Insecta</taxon>
        <taxon>Pterygota</taxon>
        <taxon>Neoptera</taxon>
        <taxon>Endopterygota</taxon>
        <taxon>Diptera</taxon>
        <taxon>Brachycera</taxon>
        <taxon>Muscomorpha</taxon>
        <taxon>Ephydroidea</taxon>
        <taxon>Drosophilidae</taxon>
        <taxon>Drosophila</taxon>
        <taxon>Sophophora</taxon>
    </lineage>
</organism>
<sequence>MATAEAQIGVNRNLQKQDLSNLDVSKLTPLSPEVISRQATINIGTIGHVAHGKSTVVKAISGVQTVRFKNELERNITIKLERLSEKKIKNLLTSKQQRQQYEIKQRSMLRHLAELRRHSRFRRLCTKPASSSMPASTSSVDRRTTRRSTSQTSLSPSNSSGYGSVFGCEEHDVDKIPSLNGFAKLKRRRSSCVGAPTPNSKRSKNNMGVIAKRPPKGEYVVERIECVEMDQYQPVFFVKWLGYHDSENTWESLANVADCAEMEKFVERHQQLYETYIAKITTELEKQLEALPLMENITVAEVDAYEPLNLQIDLILLAQYRAAGSRSQREPQKIGERALKSMQIKRAQFVRRKQLADLALFEKRMNHVEKPSPPIRVENNIDLDTIDSNFMYIHDNIIGKDVPKPEAGIVGCKCTEDTEECTASTKCCARFAGELFAYERSTRRLRLRPGSAIYECNSRCSCDSSCSNRLVQHGRQVPLVLFKTANGSGWGVRAATALRKGEFVCEYIGEIITSDEANERGKAYDDNGRTYLFDLDYNTAQDSEYTIDAANYGNISHFINHSCDPNLAVFPCWIEHLNVALPHLVFFTLRPIKAGEELSFDYIRADNEDVPYENLSTAVRVECRCGRDNCRKVLF</sequence>
<evidence type="ECO:0000250" key="1"/>
<evidence type="ECO:0000255" key="2">
    <source>
        <dbReference type="PROSITE-ProRule" id="PRU00053"/>
    </source>
</evidence>
<evidence type="ECO:0000255" key="3">
    <source>
        <dbReference type="PROSITE-ProRule" id="PRU00155"/>
    </source>
</evidence>
<evidence type="ECO:0000255" key="4">
    <source>
        <dbReference type="PROSITE-ProRule" id="PRU00157"/>
    </source>
</evidence>
<evidence type="ECO:0000255" key="5">
    <source>
        <dbReference type="PROSITE-ProRule" id="PRU00190"/>
    </source>
</evidence>
<evidence type="ECO:0000256" key="6">
    <source>
        <dbReference type="SAM" id="MobiDB-lite"/>
    </source>
</evidence>
<evidence type="ECO:0000269" key="7">
    <source>
    </source>
</evidence>
<evidence type="ECO:0000269" key="8">
    <source>
    </source>
</evidence>
<evidence type="ECO:0000269" key="9">
    <source>
    </source>
</evidence>
<evidence type="ECO:0000269" key="10">
    <source>
    </source>
</evidence>
<evidence type="ECO:0000269" key="11">
    <source>
    </source>
</evidence>
<evidence type="ECO:0000305" key="12"/>
<feature type="chain" id="PRO_0000186061" description="Histone-lysine N-methyltransferase Su(var)3-9">
    <location>
        <begin position="1"/>
        <end position="635"/>
    </location>
</feature>
<feature type="domain" description="Chromo" evidence="2">
    <location>
        <begin position="219"/>
        <end position="278"/>
    </location>
</feature>
<feature type="domain" description="Pre-SET" evidence="4">
    <location>
        <begin position="410"/>
        <end position="474"/>
    </location>
</feature>
<feature type="domain" description="SET" evidence="5">
    <location>
        <begin position="477"/>
        <end position="603"/>
    </location>
</feature>
<feature type="domain" description="Post-SET" evidence="3">
    <location>
        <begin position="619"/>
        <end position="635"/>
    </location>
</feature>
<feature type="region of interest" description="Binds to Su(var)205 and Suvar(3)7">
    <location>
        <begin position="81"/>
        <end position="188"/>
    </location>
</feature>
<feature type="region of interest" description="Disordered" evidence="6">
    <location>
        <begin position="123"/>
        <end position="161"/>
    </location>
</feature>
<feature type="region of interest" description="Disordered" evidence="6">
    <location>
        <begin position="191"/>
        <end position="210"/>
    </location>
</feature>
<feature type="compositionally biased region" description="Low complexity" evidence="6">
    <location>
        <begin position="128"/>
        <end position="139"/>
    </location>
</feature>
<feature type="compositionally biased region" description="Low complexity" evidence="6">
    <location>
        <begin position="147"/>
        <end position="161"/>
    </location>
</feature>
<feature type="binding site" evidence="1">
    <location>
        <position position="412"/>
    </location>
    <ligand>
        <name>Zn(2+)</name>
        <dbReference type="ChEBI" id="CHEBI:29105"/>
        <label>1</label>
    </ligand>
</feature>
<feature type="binding site" evidence="1">
    <location>
        <position position="412"/>
    </location>
    <ligand>
        <name>Zn(2+)</name>
        <dbReference type="ChEBI" id="CHEBI:29105"/>
        <label>2</label>
    </ligand>
</feature>
<feature type="binding site" evidence="1">
    <location>
        <position position="414"/>
    </location>
    <ligand>
        <name>Zn(2+)</name>
        <dbReference type="ChEBI" id="CHEBI:29105"/>
        <label>1</label>
    </ligand>
</feature>
<feature type="binding site" evidence="1">
    <location>
        <position position="421"/>
    </location>
    <ligand>
        <name>Zn(2+)</name>
        <dbReference type="ChEBI" id="CHEBI:29105"/>
        <label>1</label>
    </ligand>
</feature>
<feature type="binding site" evidence="1">
    <location>
        <position position="421"/>
    </location>
    <ligand>
        <name>Zn(2+)</name>
        <dbReference type="ChEBI" id="CHEBI:29105"/>
        <label>3</label>
    </ligand>
</feature>
<feature type="binding site" evidence="1">
    <location>
        <position position="427"/>
    </location>
    <ligand>
        <name>Zn(2+)</name>
        <dbReference type="ChEBI" id="CHEBI:29105"/>
        <label>1</label>
    </ligand>
</feature>
<feature type="binding site" evidence="1">
    <location>
        <position position="428"/>
    </location>
    <ligand>
        <name>Zn(2+)</name>
        <dbReference type="ChEBI" id="CHEBI:29105"/>
        <label>1</label>
    </ligand>
</feature>
<feature type="binding site" evidence="1">
    <location>
        <position position="428"/>
    </location>
    <ligand>
        <name>Zn(2+)</name>
        <dbReference type="ChEBI" id="CHEBI:29105"/>
        <label>2</label>
    </ligand>
</feature>
<feature type="binding site" evidence="1">
    <location>
        <position position="456"/>
    </location>
    <ligand>
        <name>Zn(2+)</name>
        <dbReference type="ChEBI" id="CHEBI:29105"/>
        <label>2</label>
    </ligand>
</feature>
<feature type="binding site" evidence="1">
    <location>
        <position position="456"/>
    </location>
    <ligand>
        <name>Zn(2+)</name>
        <dbReference type="ChEBI" id="CHEBI:29105"/>
        <label>3</label>
    </ligand>
</feature>
<feature type="binding site" evidence="1">
    <location>
        <position position="460"/>
    </location>
    <ligand>
        <name>Zn(2+)</name>
        <dbReference type="ChEBI" id="CHEBI:29105"/>
        <label>2</label>
    </ligand>
</feature>
<feature type="binding site" evidence="1">
    <location>
        <position position="462"/>
    </location>
    <ligand>
        <name>Zn(2+)</name>
        <dbReference type="ChEBI" id="CHEBI:29105"/>
        <label>3</label>
    </ligand>
</feature>
<feature type="binding site" evidence="1">
    <location>
        <position position="466"/>
    </location>
    <ligand>
        <name>Zn(2+)</name>
        <dbReference type="ChEBI" id="CHEBI:29105"/>
        <label>3</label>
    </ligand>
</feature>
<feature type="binding site" evidence="1">
    <location>
        <begin position="488"/>
        <end position="490"/>
    </location>
    <ligand>
        <name>S-adenosyl-L-methionine</name>
        <dbReference type="ChEBI" id="CHEBI:59789"/>
    </ligand>
</feature>
<feature type="binding site" evidence="5">
    <location>
        <position position="531"/>
    </location>
    <ligand>
        <name>S-adenosyl-L-methionine</name>
        <dbReference type="ChEBI" id="CHEBI:59789"/>
    </ligand>
</feature>
<feature type="binding site" evidence="1">
    <location>
        <begin position="560"/>
        <end position="561"/>
    </location>
    <ligand>
        <name>S-adenosyl-L-methionine</name>
        <dbReference type="ChEBI" id="CHEBI:59789"/>
    </ligand>
</feature>
<feature type="binding site" evidence="1">
    <location>
        <position position="563"/>
    </location>
    <ligand>
        <name>Zn(2+)</name>
        <dbReference type="ChEBI" id="CHEBI:29105"/>
        <label>4</label>
    </ligand>
</feature>
<feature type="binding site" evidence="1">
    <location>
        <position position="623"/>
    </location>
    <ligand>
        <name>Zn(2+)</name>
        <dbReference type="ChEBI" id="CHEBI:29105"/>
        <label>4</label>
    </ligand>
</feature>
<feature type="binding site" evidence="1">
    <location>
        <position position="625"/>
    </location>
    <ligand>
        <name>Zn(2+)</name>
        <dbReference type="ChEBI" id="CHEBI:29105"/>
        <label>4</label>
    </ligand>
</feature>
<feature type="binding site" evidence="1">
    <location>
        <position position="630"/>
    </location>
    <ligand>
        <name>Zn(2+)</name>
        <dbReference type="ChEBI" id="CHEBI:29105"/>
        <label>4</label>
    </ligand>
</feature>
<feature type="sequence conflict" description="In Ref. 4; AAF55154." evidence="12" ref="4">
    <original>T</original>
    <variation>I</variation>
    <location>
        <position position="275"/>
    </location>
</feature>
<feature type="sequence conflict" description="In Ref. 1; CAA56376." evidence="12" ref="1">
    <original>G</original>
    <variation>E</variation>
    <location>
        <position position="509"/>
    </location>
</feature>
<feature type="sequence conflict" description="In Ref. 4; AAF55154." evidence="12" ref="4">
    <original>R</original>
    <variation>A</variation>
    <location>
        <position position="627"/>
    </location>
</feature>
<accession>P45975</accession>
<accession>Q9VFA6</accession>
<gene>
    <name type="primary">Su(var)3-9</name>
    <name type="synonym">KMT1</name>
    <name type="ORF">CG6476</name>
</gene>
<protein>
    <recommendedName>
        <fullName>Histone-lysine N-methyltransferase Su(var)3-9</fullName>
        <ecNumber evidence="8">2.1.1.355</ecNumber>
    </recommendedName>
    <alternativeName>
        <fullName>Histone H3-K9 methyltransferase</fullName>
        <shortName>H3-K9-HMTase</shortName>
    </alternativeName>
    <alternativeName>
        <fullName>Lysine N-methyltransferase 1</fullName>
    </alternativeName>
    <alternativeName>
        <fullName>Protein suppressor of variegation 3-9</fullName>
    </alternativeName>
</protein>